<reference evidence="4" key="1">
    <citation type="submission" date="2007-05" db="EMBL/GenBank/DDBJ databases">
        <title>Expressed sequence tags from Mytilus californianus.</title>
        <authorList>
            <person name="Gracey A."/>
            <person name="Grimwood J."/>
            <person name="Schmutz J."/>
            <person name="Myers R.M."/>
        </authorList>
    </citation>
    <scope>NUCLEOTIDE SEQUENCE [MRNA]</scope>
</reference>
<reference evidence="4" key="2">
    <citation type="journal article" date="2011" name="J. Mol. Evol.">
        <title>Molecular evolution of mollusc shell proteins: insights from proteomic analysis of the edible mussel mytilus.</title>
        <authorList>
            <person name="Marie B."/>
            <person name="Le Roy N."/>
            <person name="Zanella-Cleon I."/>
            <person name="Becchi M."/>
            <person name="Marin F."/>
        </authorList>
    </citation>
    <scope>PROTEIN SEQUENCE OF 150-158 AND 254-261</scope>
    <scope>SUBCELLULAR LOCATION</scope>
    <scope>TISSUE SPECIFICITY</scope>
    <source>
        <tissue evidence="2">Shell</tissue>
    </source>
</reference>
<sequence>KGYQYLPVVLKVIAMTTIKNVSEHQAGICVTMSVKLPAILTRQLAQTSCPSLPDPMNRYGYLAPQYGGLRIRACPSGTIYSENQCRYKSNMNGNGGLRGSARKQFRQCSAEFKINFDDGFKDISKGGLAFDYSHISLRRGKGVFVGNSKLYIWGFQSRFLGKTFAIRMKVKIKRGAGKYRPEPIISNCGPNGDSSVEIVVHRGKVIFKAKTSDNPEAVFITEDYDDDKWTDLTYYYDGNHFGGSCNGRPFRQRTGGNLEIRDNPMTIGLCTGQNGFHGEIDELEIYTACIPKDM</sequence>
<name>PSM_MYTCA</name>
<evidence type="ECO:0000269" key="1">
    <source>
    </source>
</evidence>
<evidence type="ECO:0000269" key="2">
    <source ref="1"/>
</evidence>
<evidence type="ECO:0000303" key="3">
    <source>
    </source>
</evidence>
<evidence type="ECO:0000305" key="4"/>
<comment type="subcellular location">
    <subcellularLocation>
        <location evidence="1 2">Secreted</location>
    </subcellularLocation>
</comment>
<comment type="tissue specificity">
    <text evidence="1">Component of the organic matrix of calcified shell layers like nacre and prisms.</text>
</comment>
<feature type="chain" id="PRO_0000404083" description="Shell matrix protein">
    <location>
        <begin position="1" status="less than"/>
        <end position="294"/>
    </location>
</feature>
<feature type="sequence conflict" description="In Ref. 1; ES393395." evidence="4" ref="1">
    <original>T</original>
    <variation>H</variation>
    <location>
        <position position="211"/>
    </location>
</feature>
<feature type="non-terminal residue" evidence="3">
    <location>
        <position position="1"/>
    </location>
</feature>
<proteinExistence type="evidence at protein level"/>
<protein>
    <recommendedName>
        <fullName>Shell matrix protein</fullName>
    </recommendedName>
</protein>
<accession>P86860</accession>
<organism>
    <name type="scientific">Mytilus californianus</name>
    <name type="common">California mussel</name>
    <dbReference type="NCBI Taxonomy" id="6549"/>
    <lineage>
        <taxon>Eukaryota</taxon>
        <taxon>Metazoa</taxon>
        <taxon>Spiralia</taxon>
        <taxon>Lophotrochozoa</taxon>
        <taxon>Mollusca</taxon>
        <taxon>Bivalvia</taxon>
        <taxon>Autobranchia</taxon>
        <taxon>Pteriomorphia</taxon>
        <taxon>Mytilida</taxon>
        <taxon>Mytiloidea</taxon>
        <taxon>Mytilidae</taxon>
        <taxon>Mytilinae</taxon>
        <taxon>Mytilus</taxon>
    </lineage>
</organism>
<keyword id="KW-0903">Direct protein sequencing</keyword>
<keyword id="KW-0964">Secreted</keyword>
<dbReference type="EMBL" id="ES393395">
    <property type="status" value="NOT_ANNOTATED_CDS"/>
    <property type="molecule type" value="mRNA"/>
</dbReference>
<dbReference type="EMBL" id="ES393550">
    <property type="status" value="NOT_ANNOTATED_CDS"/>
    <property type="molecule type" value="mRNA"/>
</dbReference>
<dbReference type="SMR" id="P86860"/>
<dbReference type="GO" id="GO:0005576">
    <property type="term" value="C:extracellular region"/>
    <property type="evidence" value="ECO:0007669"/>
    <property type="project" value="UniProtKB-SubCell"/>
</dbReference>
<dbReference type="Gene3D" id="2.60.120.200">
    <property type="match status" value="1"/>
</dbReference>
<dbReference type="InterPro" id="IPR013320">
    <property type="entry name" value="ConA-like_dom_sf"/>
</dbReference>
<dbReference type="SUPFAM" id="SSF49899">
    <property type="entry name" value="Concanavalin A-like lectins/glucanases"/>
    <property type="match status" value="1"/>
</dbReference>